<accession>Q04MN3</accession>
<reference key="1">
    <citation type="journal article" date="2007" name="J. Bacteriol.">
        <title>Genome sequence of Avery's virulent serotype 2 strain D39 of Streptococcus pneumoniae and comparison with that of unencapsulated laboratory strain R6.</title>
        <authorList>
            <person name="Lanie J.A."/>
            <person name="Ng W.-L."/>
            <person name="Kazmierczak K.M."/>
            <person name="Andrzejewski T.M."/>
            <person name="Davidsen T.M."/>
            <person name="Wayne K.J."/>
            <person name="Tettelin H."/>
            <person name="Glass J.I."/>
            <person name="Winkler M.E."/>
        </authorList>
    </citation>
    <scope>NUCLEOTIDE SEQUENCE [LARGE SCALE GENOMIC DNA]</scope>
    <source>
        <strain>D39 / NCTC 7466</strain>
    </source>
</reference>
<name>RL2_STRP2</name>
<organism>
    <name type="scientific">Streptococcus pneumoniae serotype 2 (strain D39 / NCTC 7466)</name>
    <dbReference type="NCBI Taxonomy" id="373153"/>
    <lineage>
        <taxon>Bacteria</taxon>
        <taxon>Bacillati</taxon>
        <taxon>Bacillota</taxon>
        <taxon>Bacilli</taxon>
        <taxon>Lactobacillales</taxon>
        <taxon>Streptococcaceae</taxon>
        <taxon>Streptococcus</taxon>
    </lineage>
</organism>
<proteinExistence type="inferred from homology"/>
<keyword id="KW-1185">Reference proteome</keyword>
<keyword id="KW-0687">Ribonucleoprotein</keyword>
<keyword id="KW-0689">Ribosomal protein</keyword>
<keyword id="KW-0694">RNA-binding</keyword>
<keyword id="KW-0699">rRNA-binding</keyword>
<comment type="function">
    <text evidence="1">One of the primary rRNA binding proteins. Required for association of the 30S and 50S subunits to form the 70S ribosome, for tRNA binding and peptide bond formation. It has been suggested to have peptidyltransferase activity; this is somewhat controversial. Makes several contacts with the 16S rRNA in the 70S ribosome.</text>
</comment>
<comment type="subunit">
    <text evidence="1">Part of the 50S ribosomal subunit. Forms a bridge to the 30S subunit in the 70S ribosome.</text>
</comment>
<comment type="similarity">
    <text evidence="1">Belongs to the universal ribosomal protein uL2 family.</text>
</comment>
<feature type="chain" id="PRO_0000310020" description="Large ribosomal subunit protein uL2">
    <location>
        <begin position="1"/>
        <end position="277"/>
    </location>
</feature>
<feature type="region of interest" description="Disordered" evidence="2">
    <location>
        <begin position="219"/>
        <end position="277"/>
    </location>
</feature>
<feature type="compositionally biased region" description="Basic and acidic residues" evidence="2">
    <location>
        <begin position="264"/>
        <end position="277"/>
    </location>
</feature>
<gene>
    <name evidence="1" type="primary">rplB</name>
    <name type="ordered locus">SPD_0196</name>
</gene>
<sequence length="277" mass="29920">MGIRVYKPTTNGRRNMTSLDFAEITTSTPEKSLLVALKSKAGRNNNGRITVRHQGGGHKRFYRLVDFKRNKDNVEAVVKTIEYDPNRSANIALVHYTDGVKAYIIAPKGLEVGQRIVSGPEADIKVGNALPLANIPVGTLIHNIELKPGRGGELVRAAGASAQVLGSEGKYVLVRLQSGEVRMILGTCRATVGVVGNEQHGLVNLGKAGRSRWKGIRPTVRGSVMNPNDHPHGGGEGKAPVGRKAPSTPWGKPALGLKTRNKKAKSDKLIVRRRNEK</sequence>
<evidence type="ECO:0000255" key="1">
    <source>
        <dbReference type="HAMAP-Rule" id="MF_01320"/>
    </source>
</evidence>
<evidence type="ECO:0000256" key="2">
    <source>
        <dbReference type="SAM" id="MobiDB-lite"/>
    </source>
</evidence>
<evidence type="ECO:0000305" key="3"/>
<dbReference type="EMBL" id="CP000410">
    <property type="protein sequence ID" value="ABJ53934.1"/>
    <property type="molecule type" value="Genomic_DNA"/>
</dbReference>
<dbReference type="RefSeq" id="WP_000512911.1">
    <property type="nucleotide sequence ID" value="NZ_JAMLJR010000002.1"/>
</dbReference>
<dbReference type="SMR" id="Q04MN3"/>
<dbReference type="PaxDb" id="373153-SPD_0196"/>
<dbReference type="GeneID" id="93738960"/>
<dbReference type="KEGG" id="spd:SPD_0196"/>
<dbReference type="eggNOG" id="COG0090">
    <property type="taxonomic scope" value="Bacteria"/>
</dbReference>
<dbReference type="HOGENOM" id="CLU_036235_2_1_9"/>
<dbReference type="BioCyc" id="SPNE373153:G1G6V-219-MONOMER"/>
<dbReference type="Proteomes" id="UP000001452">
    <property type="component" value="Chromosome"/>
</dbReference>
<dbReference type="GO" id="GO:0015934">
    <property type="term" value="C:large ribosomal subunit"/>
    <property type="evidence" value="ECO:0007669"/>
    <property type="project" value="InterPro"/>
</dbReference>
<dbReference type="GO" id="GO:0019843">
    <property type="term" value="F:rRNA binding"/>
    <property type="evidence" value="ECO:0007669"/>
    <property type="project" value="UniProtKB-UniRule"/>
</dbReference>
<dbReference type="GO" id="GO:0003735">
    <property type="term" value="F:structural constituent of ribosome"/>
    <property type="evidence" value="ECO:0007669"/>
    <property type="project" value="InterPro"/>
</dbReference>
<dbReference type="GO" id="GO:0016740">
    <property type="term" value="F:transferase activity"/>
    <property type="evidence" value="ECO:0007669"/>
    <property type="project" value="InterPro"/>
</dbReference>
<dbReference type="GO" id="GO:0002181">
    <property type="term" value="P:cytoplasmic translation"/>
    <property type="evidence" value="ECO:0007669"/>
    <property type="project" value="TreeGrafter"/>
</dbReference>
<dbReference type="FunFam" id="2.30.30.30:FF:000001">
    <property type="entry name" value="50S ribosomal protein L2"/>
    <property type="match status" value="1"/>
</dbReference>
<dbReference type="FunFam" id="2.40.50.140:FF:000003">
    <property type="entry name" value="50S ribosomal protein L2"/>
    <property type="match status" value="1"/>
</dbReference>
<dbReference type="FunFam" id="4.10.950.10:FF:000001">
    <property type="entry name" value="50S ribosomal protein L2"/>
    <property type="match status" value="1"/>
</dbReference>
<dbReference type="Gene3D" id="2.30.30.30">
    <property type="match status" value="1"/>
</dbReference>
<dbReference type="Gene3D" id="2.40.50.140">
    <property type="entry name" value="Nucleic acid-binding proteins"/>
    <property type="match status" value="1"/>
</dbReference>
<dbReference type="Gene3D" id="4.10.950.10">
    <property type="entry name" value="Ribosomal protein L2, domain 3"/>
    <property type="match status" value="1"/>
</dbReference>
<dbReference type="HAMAP" id="MF_01320_B">
    <property type="entry name" value="Ribosomal_uL2_B"/>
    <property type="match status" value="1"/>
</dbReference>
<dbReference type="InterPro" id="IPR012340">
    <property type="entry name" value="NA-bd_OB-fold"/>
</dbReference>
<dbReference type="InterPro" id="IPR014722">
    <property type="entry name" value="Rib_uL2_dom2"/>
</dbReference>
<dbReference type="InterPro" id="IPR002171">
    <property type="entry name" value="Ribosomal_uL2"/>
</dbReference>
<dbReference type="InterPro" id="IPR005880">
    <property type="entry name" value="Ribosomal_uL2_bac/org-type"/>
</dbReference>
<dbReference type="InterPro" id="IPR022669">
    <property type="entry name" value="Ribosomal_uL2_C"/>
</dbReference>
<dbReference type="InterPro" id="IPR022671">
    <property type="entry name" value="Ribosomal_uL2_CS"/>
</dbReference>
<dbReference type="InterPro" id="IPR014726">
    <property type="entry name" value="Ribosomal_uL2_dom3"/>
</dbReference>
<dbReference type="InterPro" id="IPR022666">
    <property type="entry name" value="Ribosomal_uL2_RNA-bd_dom"/>
</dbReference>
<dbReference type="InterPro" id="IPR008991">
    <property type="entry name" value="Translation_prot_SH3-like_sf"/>
</dbReference>
<dbReference type="NCBIfam" id="TIGR01171">
    <property type="entry name" value="rplB_bact"/>
    <property type="match status" value="1"/>
</dbReference>
<dbReference type="PANTHER" id="PTHR13691:SF5">
    <property type="entry name" value="LARGE RIBOSOMAL SUBUNIT PROTEIN UL2M"/>
    <property type="match status" value="1"/>
</dbReference>
<dbReference type="PANTHER" id="PTHR13691">
    <property type="entry name" value="RIBOSOMAL PROTEIN L2"/>
    <property type="match status" value="1"/>
</dbReference>
<dbReference type="Pfam" id="PF00181">
    <property type="entry name" value="Ribosomal_L2"/>
    <property type="match status" value="1"/>
</dbReference>
<dbReference type="Pfam" id="PF03947">
    <property type="entry name" value="Ribosomal_L2_C"/>
    <property type="match status" value="1"/>
</dbReference>
<dbReference type="PIRSF" id="PIRSF002158">
    <property type="entry name" value="Ribosomal_L2"/>
    <property type="match status" value="1"/>
</dbReference>
<dbReference type="SMART" id="SM01383">
    <property type="entry name" value="Ribosomal_L2"/>
    <property type="match status" value="1"/>
</dbReference>
<dbReference type="SMART" id="SM01382">
    <property type="entry name" value="Ribosomal_L2_C"/>
    <property type="match status" value="1"/>
</dbReference>
<dbReference type="SUPFAM" id="SSF50249">
    <property type="entry name" value="Nucleic acid-binding proteins"/>
    <property type="match status" value="1"/>
</dbReference>
<dbReference type="SUPFAM" id="SSF50104">
    <property type="entry name" value="Translation proteins SH3-like domain"/>
    <property type="match status" value="1"/>
</dbReference>
<dbReference type="PROSITE" id="PS00467">
    <property type="entry name" value="RIBOSOMAL_L2"/>
    <property type="match status" value="1"/>
</dbReference>
<protein>
    <recommendedName>
        <fullName evidence="1">Large ribosomal subunit protein uL2</fullName>
    </recommendedName>
    <alternativeName>
        <fullName evidence="3">50S ribosomal protein L2</fullName>
    </alternativeName>
</protein>